<comment type="function">
    <text evidence="1">NDH-1 shuttles electrons from an unknown electron donor, via FMN and iron-sulfur (Fe-S) centers, to quinones in the respiratory and/or the photosynthetic chain. The immediate electron acceptor for the enzyme in this species is believed to be plastoquinone. Couples the redox reaction to proton translocation, and thus conserves the redox energy in a proton gradient. Cyanobacterial NDH-1 also plays a role in inorganic carbon-concentration.</text>
</comment>
<comment type="catalytic activity">
    <reaction evidence="1">
        <text>a plastoquinone + NADH + (n+1) H(+)(in) = a plastoquinol + NAD(+) + n H(+)(out)</text>
        <dbReference type="Rhea" id="RHEA:42608"/>
        <dbReference type="Rhea" id="RHEA-COMP:9561"/>
        <dbReference type="Rhea" id="RHEA-COMP:9562"/>
        <dbReference type="ChEBI" id="CHEBI:15378"/>
        <dbReference type="ChEBI" id="CHEBI:17757"/>
        <dbReference type="ChEBI" id="CHEBI:57540"/>
        <dbReference type="ChEBI" id="CHEBI:57945"/>
        <dbReference type="ChEBI" id="CHEBI:62192"/>
    </reaction>
</comment>
<comment type="catalytic activity">
    <reaction evidence="1">
        <text>a plastoquinone + NADPH + (n+1) H(+)(in) = a plastoquinol + NADP(+) + n H(+)(out)</text>
        <dbReference type="Rhea" id="RHEA:42612"/>
        <dbReference type="Rhea" id="RHEA-COMP:9561"/>
        <dbReference type="Rhea" id="RHEA-COMP:9562"/>
        <dbReference type="ChEBI" id="CHEBI:15378"/>
        <dbReference type="ChEBI" id="CHEBI:17757"/>
        <dbReference type="ChEBI" id="CHEBI:57783"/>
        <dbReference type="ChEBI" id="CHEBI:58349"/>
        <dbReference type="ChEBI" id="CHEBI:62192"/>
    </reaction>
</comment>
<comment type="subunit">
    <text evidence="1">NDH-1 can be composed of about 15 different subunits; different subcomplexes with different compositions have been identified which probably have different functions.</text>
</comment>
<comment type="subcellular location">
    <subcellularLocation>
        <location evidence="1">Cellular thylakoid membrane</location>
        <topology evidence="1">Multi-pass membrane protein</topology>
    </subcellularLocation>
</comment>
<comment type="similarity">
    <text evidence="1">Belongs to the complex I subunit 3 family.</text>
</comment>
<keyword id="KW-0472">Membrane</keyword>
<keyword id="KW-0520">NAD</keyword>
<keyword id="KW-0521">NADP</keyword>
<keyword id="KW-0618">Plastoquinone</keyword>
<keyword id="KW-0874">Quinone</keyword>
<keyword id="KW-1185">Reference proteome</keyword>
<keyword id="KW-0793">Thylakoid</keyword>
<keyword id="KW-1278">Translocase</keyword>
<keyword id="KW-0812">Transmembrane</keyword>
<keyword id="KW-1133">Transmembrane helix</keyword>
<keyword id="KW-0813">Transport</keyword>
<reference key="1">
    <citation type="journal article" date="2003" name="Nature">
        <title>Genome divergence in two Prochlorococcus ecotypes reflects oceanic niche differentiation.</title>
        <authorList>
            <person name="Rocap G."/>
            <person name="Larimer F.W."/>
            <person name="Lamerdin J.E."/>
            <person name="Malfatti S."/>
            <person name="Chain P."/>
            <person name="Ahlgren N.A."/>
            <person name="Arellano A."/>
            <person name="Coleman M."/>
            <person name="Hauser L."/>
            <person name="Hess W.R."/>
            <person name="Johnson Z.I."/>
            <person name="Land M.L."/>
            <person name="Lindell D."/>
            <person name="Post A.F."/>
            <person name="Regala W."/>
            <person name="Shah M."/>
            <person name="Shaw S.L."/>
            <person name="Steglich C."/>
            <person name="Sullivan M.B."/>
            <person name="Ting C.S."/>
            <person name="Tolonen A."/>
            <person name="Webb E.A."/>
            <person name="Zinser E.R."/>
            <person name="Chisholm S.W."/>
        </authorList>
    </citation>
    <scope>NUCLEOTIDE SEQUENCE [LARGE SCALE GENOMIC DNA]</scope>
    <source>
        <strain>MIT 9313</strain>
    </source>
</reference>
<feature type="chain" id="PRO_0000362725" description="NAD(P)H-quinone oxidoreductase subunit 3">
    <location>
        <begin position="1"/>
        <end position="120"/>
    </location>
</feature>
<feature type="transmembrane region" description="Helical" evidence="1">
    <location>
        <begin position="6"/>
        <end position="26"/>
    </location>
</feature>
<feature type="transmembrane region" description="Helical" evidence="1">
    <location>
        <begin position="64"/>
        <end position="84"/>
    </location>
</feature>
<feature type="transmembrane region" description="Helical" evidence="1">
    <location>
        <begin position="89"/>
        <end position="109"/>
    </location>
</feature>
<organism>
    <name type="scientific">Prochlorococcus marinus (strain MIT 9313)</name>
    <dbReference type="NCBI Taxonomy" id="74547"/>
    <lineage>
        <taxon>Bacteria</taxon>
        <taxon>Bacillati</taxon>
        <taxon>Cyanobacteriota</taxon>
        <taxon>Cyanophyceae</taxon>
        <taxon>Synechococcales</taxon>
        <taxon>Prochlorococcaceae</taxon>
        <taxon>Prochlorococcus</taxon>
    </lineage>
</organism>
<dbReference type="EC" id="7.1.1.-" evidence="1"/>
<dbReference type="EMBL" id="BX548175">
    <property type="protein sequence ID" value="CAE22068.1"/>
    <property type="molecule type" value="Genomic_DNA"/>
</dbReference>
<dbReference type="RefSeq" id="WP_011131259.1">
    <property type="nucleotide sequence ID" value="NC_005071.1"/>
</dbReference>
<dbReference type="SMR" id="Q7TUM3"/>
<dbReference type="KEGG" id="pmt:PMT_1893"/>
<dbReference type="eggNOG" id="COG0838">
    <property type="taxonomic scope" value="Bacteria"/>
</dbReference>
<dbReference type="HOGENOM" id="CLU_119549_1_1_3"/>
<dbReference type="OrthoDB" id="9791970at2"/>
<dbReference type="Proteomes" id="UP000001423">
    <property type="component" value="Chromosome"/>
</dbReference>
<dbReference type="GO" id="GO:0030964">
    <property type="term" value="C:NADH dehydrogenase complex"/>
    <property type="evidence" value="ECO:0007669"/>
    <property type="project" value="TreeGrafter"/>
</dbReference>
<dbReference type="GO" id="GO:0031676">
    <property type="term" value="C:plasma membrane-derived thylakoid membrane"/>
    <property type="evidence" value="ECO:0007669"/>
    <property type="project" value="UniProtKB-SubCell"/>
</dbReference>
<dbReference type="GO" id="GO:0008137">
    <property type="term" value="F:NADH dehydrogenase (ubiquinone) activity"/>
    <property type="evidence" value="ECO:0007669"/>
    <property type="project" value="InterPro"/>
</dbReference>
<dbReference type="GO" id="GO:0048038">
    <property type="term" value="F:quinone binding"/>
    <property type="evidence" value="ECO:0007669"/>
    <property type="project" value="UniProtKB-KW"/>
</dbReference>
<dbReference type="GO" id="GO:0019684">
    <property type="term" value="P:photosynthesis, light reaction"/>
    <property type="evidence" value="ECO:0007669"/>
    <property type="project" value="UniProtKB-UniRule"/>
</dbReference>
<dbReference type="Gene3D" id="1.20.58.1610">
    <property type="entry name" value="NADH:ubiquinone/plastoquinone oxidoreductase, chain 3"/>
    <property type="match status" value="1"/>
</dbReference>
<dbReference type="HAMAP" id="MF_01394">
    <property type="entry name" value="NDH1_NuoA"/>
    <property type="match status" value="1"/>
</dbReference>
<dbReference type="InterPro" id="IPR023043">
    <property type="entry name" value="NAD(P)H_OxRDtase_bac/plastid"/>
</dbReference>
<dbReference type="InterPro" id="IPR000440">
    <property type="entry name" value="NADH_UbQ/plastoQ_OxRdtase_su3"/>
</dbReference>
<dbReference type="InterPro" id="IPR038430">
    <property type="entry name" value="NDAH_ubi_oxred_su3_sf"/>
</dbReference>
<dbReference type="PANTHER" id="PTHR11058">
    <property type="entry name" value="NADH-UBIQUINONE OXIDOREDUCTASE CHAIN 3"/>
    <property type="match status" value="1"/>
</dbReference>
<dbReference type="PANTHER" id="PTHR11058:SF9">
    <property type="entry name" value="NADH-UBIQUINONE OXIDOREDUCTASE CHAIN 3"/>
    <property type="match status" value="1"/>
</dbReference>
<dbReference type="Pfam" id="PF00507">
    <property type="entry name" value="Oxidored_q4"/>
    <property type="match status" value="1"/>
</dbReference>
<gene>
    <name evidence="1" type="primary">ndhC</name>
    <name type="ordered locus">PMT_1893</name>
</gene>
<sequence>MFALPGYDAFLGFLLISAAVPILALVTNKLLAPRSRTGERELTYESGMEPIGGAWIQFNIRYYMFALVFVIFDVETVFLYPWAVAFHRLGLLAFIEALIFIAILLVALAYAWRKGALEWS</sequence>
<name>NU3C_PROMM</name>
<proteinExistence type="inferred from homology"/>
<protein>
    <recommendedName>
        <fullName evidence="1">NAD(P)H-quinone oxidoreductase subunit 3</fullName>
        <ecNumber evidence="1">7.1.1.-</ecNumber>
    </recommendedName>
    <alternativeName>
        <fullName evidence="1">NAD(P)H dehydrogenase subunit 3</fullName>
    </alternativeName>
    <alternativeName>
        <fullName evidence="1">NADH-plastoquinone oxidoreductase subunit 3</fullName>
    </alternativeName>
    <alternativeName>
        <fullName evidence="1">NDH-1 subunit 3</fullName>
        <shortName evidence="1">NDH-C</shortName>
    </alternativeName>
</protein>
<evidence type="ECO:0000255" key="1">
    <source>
        <dbReference type="HAMAP-Rule" id="MF_01394"/>
    </source>
</evidence>
<accession>Q7TUM3</accession>